<comment type="function">
    <text evidence="4 6 9 10 11">Component of a topoisomerase 6 complex specifically required for meiotic recombination (PubMed:11157765, PubMed:17018031, PubMed:17965269, PubMed:26917763). Together with MTOPVIB, mediates DNA cleavage that forms the double-strand breaks (DSB) that initiate meiotic recombination (PubMed:19763177, PubMed:26917763). The complex promotes relaxation of negative and positive supercoiled DNA and DNA decatenation through cleavage and ligation cycles (PubMed:11157765, PubMed:17018031, PubMed:17965269, PubMed:26917763).</text>
</comment>
<comment type="catalytic activity">
    <reaction evidence="2 14">
        <text>ATP-dependent breakage, passage and rejoining of double-stranded DNA.</text>
        <dbReference type="EC" id="5.6.2.2"/>
    </reaction>
</comment>
<comment type="cofactor">
    <cofactor evidence="1">
        <name>Mg(2+)</name>
        <dbReference type="ChEBI" id="CHEBI:18420"/>
    </cofactor>
</comment>
<comment type="subunit">
    <text evidence="5 7 11 12">Heterotetramer of 2 SPO11 (SPO11-1 and/or SPO11-2) and 2 MTOPVIB chains (Probable). Interacts with MTOPVIB (PubMed:26917763, PubMed:28855712). May form a heterodimer with SPO11-2. Interacts with PRD1 (PubMed:17762870, PubMed:28855712). Does not interact with TOP6B (PubMed:11410368).</text>
</comment>
<comment type="interaction">
    <interactant intactId="EBI-1540725">
        <id>Q9M4A2</id>
    </interactant>
    <interactant intactId="EBI-16200362">
        <id>Q5Q0E6</id>
        <label>MTOPVIB</label>
    </interactant>
    <organismsDiffer>false</organismsDiffer>
    <experiments>6</experiments>
</comment>
<comment type="interaction">
    <interactant intactId="EBI-1540725">
        <id>Q9M4A2</id>
    </interactant>
    <interactant intactId="EBI-1772309">
        <id>Q9M4A1</id>
        <label>SPO11-2</label>
    </interactant>
    <organismsDiffer>false</organismsDiffer>
    <experiments>7</experiments>
</comment>
<comment type="subcellular location">
    <subcellularLocation>
        <location evidence="8">Nucleus</location>
    </subcellularLocation>
</comment>
<comment type="alternative products">
    <event type="alternative splicing"/>
    <isoform>
        <id>Q9M4A2-1</id>
        <name>1</name>
        <sequence type="displayed"/>
    </isoform>
    <text>A number of isoforms are produced. According to EST sequences.</text>
</comment>
<comment type="tissue specificity">
    <text evidence="3">Expressed in shoots, young seedlings, flowers and reproductive tissues. Not found in roots or rosette leaves.</text>
</comment>
<comment type="developmental stage">
    <text evidence="8">Accumulates in early G2 phase and then disappears over a period of between 1 and 5 hours post-S phase.</text>
</comment>
<comment type="disruption phenotype">
    <text evidence="4 6 10">Plants show a semi-sterile phenotype and a drastic decrease of meiotic recombination, indicating that SPO11-2 and SPO11-3 are not functionally redundant. SPO11-1 and SPO11-2 are both required for double-strand breaks induction. Drastic decrease in chiasma formation at metaphase I associated with an absence of synapsis in prophase, due to the inability to make double-strand breaks (DSB) (PubMed:19763177).</text>
</comment>
<comment type="similarity">
    <text evidence="14">Belongs to the TOP6A family.</text>
</comment>
<comment type="sequence caution" evidence="14">
    <conflict type="erroneous gene model prediction">
        <sequence resource="EMBL-CDS" id="BAB01408"/>
    </conflict>
</comment>
<proteinExistence type="evidence at protein level"/>
<accession>Q9M4A2</accession>
<accession>Q9C5S3</accession>
<accession>Q9LK56</accession>
<protein>
    <recommendedName>
        <fullName evidence="13">Meiotic recombination protein SPO11-1</fullName>
        <shortName evidence="13">AtSPO11-1</shortName>
        <ecNumber evidence="14">5.6.2.2</ecNumber>
    </recommendedName>
</protein>
<keyword id="KW-0025">Alternative splicing</keyword>
<keyword id="KW-0238">DNA-binding</keyword>
<keyword id="KW-0413">Isomerase</keyword>
<keyword id="KW-0460">Magnesium</keyword>
<keyword id="KW-0469">Meiosis</keyword>
<keyword id="KW-0479">Metal-binding</keyword>
<keyword id="KW-0539">Nucleus</keyword>
<keyword id="KW-1185">Reference proteome</keyword>
<keyword id="KW-0799">Topoisomerase</keyword>
<sequence length="362" mass="41804">MEGKFAISESTNLLQRIKDFTQSVVVDLAEGRSPKISINQFRNYCMNPEADCLCSSDKPKGQEIFTLKKEPQTYRIDMLLRVLLIVQQLLQENRHASKRDIYYMHPSAFKAQSIVDRAIGDICILFQCSRYNLNVVSVGNGLVMGWLKFREAGRKFDCLNSLNTAYPVPVLVEEVEDIVSLAEYILVVEKETVFQRLANDMFCKTNRCIVITGRGYPDVSTRRFLRLLMEKLHLPVHCLVDCDPYGFEILATYRFGSMQMAYDIESLRAPDMKWLGAFPSDSEVYSVPKQCLLPLTEEDKKRTEAMLLRCYLKREMPQWRLELETMLKRGVKFEIEALSVHSLSFLSEVYIPSKIRREVSSP</sequence>
<feature type="chain" id="PRO_0000346110" description="Meiotic recombination protein SPO11-1">
    <location>
        <begin position="1"/>
        <end position="362"/>
    </location>
</feature>
<feature type="domain" description="Topo IIA-type catalytic" evidence="2">
    <location>
        <begin position="8"/>
        <end position="142"/>
    </location>
</feature>
<feature type="active site" description="O-(5'-phospho-DNA)-tyrosine intermediate" evidence="2 9">
    <location>
        <position position="103"/>
    </location>
</feature>
<feature type="binding site" evidence="1">
    <location>
        <position position="189"/>
    </location>
    <ligand>
        <name>Mg(2+)</name>
        <dbReference type="ChEBI" id="CHEBI:18420"/>
    </ligand>
</feature>
<feature type="binding site" evidence="1">
    <location>
        <position position="241"/>
    </location>
    <ligand>
        <name>Mg(2+)</name>
        <dbReference type="ChEBI" id="CHEBI:18420"/>
    </ligand>
</feature>
<feature type="mutagenesis site" description="Loss of double-strand breaks induction." evidence="9">
    <original>Y</original>
    <variation>F</variation>
    <location>
        <position position="103"/>
    </location>
</feature>
<feature type="sequence conflict" description="In Ref. 2; AAK21002." evidence="14" ref="2">
    <original>F</original>
    <variation>I</variation>
    <location>
        <position position="5"/>
    </location>
</feature>
<feature type="sequence conflict" description="In Ref. 2; AAK21002." evidence="14" ref="2">
    <original>S</original>
    <variation>T</variation>
    <location>
        <position position="10"/>
    </location>
</feature>
<feature type="sequence conflict" description="In Ref. 2; AAK21002." evidence="14" ref="2">
    <original>V</original>
    <variation>E</variation>
    <location>
        <position position="26"/>
    </location>
</feature>
<feature type="sequence conflict" description="In Ref. 2; AAK21002." evidence="14" ref="2">
    <original>N</original>
    <variation>S</variation>
    <location>
        <position position="39"/>
    </location>
</feature>
<feature type="sequence conflict" description="In Ref. 2; AAK21002." evidence="14" ref="2">
    <original>F</original>
    <variation>L</variation>
    <location>
        <position position="65"/>
    </location>
</feature>
<feature type="sequence conflict" description="In Ref. 2; AAK21002." evidence="14" ref="2">
    <original>V</original>
    <variation>I</variation>
    <location>
        <position position="349"/>
    </location>
</feature>
<feature type="sequence conflict" description="In Ref. 2; AAK21002." evidence="14" ref="2">
    <original>V</original>
    <variation>L</variation>
    <location>
        <position position="359"/>
    </location>
</feature>
<dbReference type="EC" id="5.6.2.2" evidence="14"/>
<dbReference type="EMBL" id="AJ251989">
    <property type="protein sequence ID" value="CAB81544.1"/>
    <property type="molecule type" value="mRNA"/>
</dbReference>
<dbReference type="EMBL" id="AF302928">
    <property type="protein sequence ID" value="AAK21002.1"/>
    <property type="molecule type" value="Genomic_DNA"/>
</dbReference>
<dbReference type="EMBL" id="AP000375">
    <property type="protein sequence ID" value="BAB01408.1"/>
    <property type="status" value="ALT_SEQ"/>
    <property type="molecule type" value="Genomic_DNA"/>
</dbReference>
<dbReference type="EMBL" id="CP002686">
    <property type="protein sequence ID" value="AEE75304.1"/>
    <property type="molecule type" value="Genomic_DNA"/>
</dbReference>
<dbReference type="EMBL" id="BT028955">
    <property type="protein sequence ID" value="ABI49502.1"/>
    <property type="molecule type" value="mRNA"/>
</dbReference>
<dbReference type="PIR" id="T52652">
    <property type="entry name" value="T52652"/>
</dbReference>
<dbReference type="RefSeq" id="NP_187923.1">
    <molecule id="Q9M4A2-1"/>
    <property type="nucleotide sequence ID" value="NM_112156.2"/>
</dbReference>
<dbReference type="SMR" id="Q9M4A2"/>
<dbReference type="DIP" id="DIP-62004N"/>
<dbReference type="FunCoup" id="Q9M4A2">
    <property type="interactions" value="110"/>
</dbReference>
<dbReference type="IntAct" id="Q9M4A2">
    <property type="interactions" value="3"/>
</dbReference>
<dbReference type="MINT" id="Q9M4A2"/>
<dbReference type="STRING" id="3702.Q9M4A2"/>
<dbReference type="PaxDb" id="3702-AT3G13170.1"/>
<dbReference type="EnsemblPlants" id="AT3G13170.1">
    <molecule id="Q9M4A2-1"/>
    <property type="protein sequence ID" value="AT3G13170.1"/>
    <property type="gene ID" value="AT3G13170"/>
</dbReference>
<dbReference type="GeneID" id="820506"/>
<dbReference type="Gramene" id="AT3G13170.1">
    <molecule id="Q9M4A2-1"/>
    <property type="protein sequence ID" value="AT3G13170.1"/>
    <property type="gene ID" value="AT3G13170"/>
</dbReference>
<dbReference type="KEGG" id="ath:AT3G13170"/>
<dbReference type="Araport" id="AT3G13170"/>
<dbReference type="TAIR" id="AT3G13170">
    <property type="gene designation" value="SPO11-1"/>
</dbReference>
<dbReference type="eggNOG" id="KOG2795">
    <property type="taxonomic scope" value="Eukaryota"/>
</dbReference>
<dbReference type="HOGENOM" id="CLU_037229_1_1_1"/>
<dbReference type="InParanoid" id="Q9M4A2"/>
<dbReference type="OMA" id="IYYLDPV"/>
<dbReference type="PhylomeDB" id="Q9M4A2"/>
<dbReference type="PRO" id="PR:Q9M4A2"/>
<dbReference type="Proteomes" id="UP000006548">
    <property type="component" value="Chromosome 3"/>
</dbReference>
<dbReference type="ExpressionAtlas" id="Q9M4A2">
    <property type="expression patterns" value="baseline and differential"/>
</dbReference>
<dbReference type="GO" id="GO:0005694">
    <property type="term" value="C:chromosome"/>
    <property type="evidence" value="ECO:0007669"/>
    <property type="project" value="InterPro"/>
</dbReference>
<dbReference type="GO" id="GO:0005634">
    <property type="term" value="C:nucleus"/>
    <property type="evidence" value="ECO:0000314"/>
    <property type="project" value="TAIR"/>
</dbReference>
<dbReference type="GO" id="GO:0005524">
    <property type="term" value="F:ATP binding"/>
    <property type="evidence" value="ECO:0007669"/>
    <property type="project" value="InterPro"/>
</dbReference>
<dbReference type="GO" id="GO:0003677">
    <property type="term" value="F:DNA binding"/>
    <property type="evidence" value="ECO:0000314"/>
    <property type="project" value="TAIR"/>
</dbReference>
<dbReference type="GO" id="GO:0003918">
    <property type="term" value="F:DNA topoisomerase type II (double strand cut, ATP-hydrolyzing) activity"/>
    <property type="evidence" value="ECO:0007669"/>
    <property type="project" value="UniProtKB-EC"/>
</dbReference>
<dbReference type="GO" id="GO:0046872">
    <property type="term" value="F:metal ion binding"/>
    <property type="evidence" value="ECO:0007669"/>
    <property type="project" value="UniProtKB-KW"/>
</dbReference>
<dbReference type="GO" id="GO:0051026">
    <property type="term" value="P:chiasma assembly"/>
    <property type="evidence" value="ECO:0000315"/>
    <property type="project" value="TAIR"/>
</dbReference>
<dbReference type="GO" id="GO:0000724">
    <property type="term" value="P:double-strand break repair via homologous recombination"/>
    <property type="evidence" value="ECO:0007669"/>
    <property type="project" value="EnsemblPlants"/>
</dbReference>
<dbReference type="GO" id="GO:0007129">
    <property type="term" value="P:homologous chromosome pairing at meiosis"/>
    <property type="evidence" value="ECO:0000315"/>
    <property type="project" value="TAIR"/>
</dbReference>
<dbReference type="GO" id="GO:0042138">
    <property type="term" value="P:meiotic DNA double-strand break formation"/>
    <property type="evidence" value="ECO:0000316"/>
    <property type="project" value="TAIR"/>
</dbReference>
<dbReference type="GO" id="GO:0007131">
    <property type="term" value="P:reciprocal meiotic recombination"/>
    <property type="evidence" value="ECO:0000315"/>
    <property type="project" value="TAIR"/>
</dbReference>
<dbReference type="CDD" id="cd00223">
    <property type="entry name" value="TOPRIM_TopoIIB_SPO"/>
    <property type="match status" value="1"/>
</dbReference>
<dbReference type="FunFam" id="3.40.1360.10:FF:000003">
    <property type="entry name" value="DNA topoisomerase 6 subunit A"/>
    <property type="match status" value="1"/>
</dbReference>
<dbReference type="FunFam" id="1.10.10.10:FF:000778">
    <property type="entry name" value="Meiotic recombination protein SPO11-1"/>
    <property type="match status" value="1"/>
</dbReference>
<dbReference type="Gene3D" id="3.40.1360.10">
    <property type="match status" value="1"/>
</dbReference>
<dbReference type="Gene3D" id="1.10.10.10">
    <property type="entry name" value="Winged helix-like DNA-binding domain superfamily/Winged helix DNA-binding domain"/>
    <property type="match status" value="1"/>
</dbReference>
<dbReference type="InterPro" id="IPR013048">
    <property type="entry name" value="Meiotic_Spo11"/>
</dbReference>
<dbReference type="InterPro" id="IPR002815">
    <property type="entry name" value="Spo11/TopoVI_A"/>
</dbReference>
<dbReference type="InterPro" id="IPR013049">
    <property type="entry name" value="Spo11/TopoVI_A_N"/>
</dbReference>
<dbReference type="InterPro" id="IPR036078">
    <property type="entry name" value="Spo11/TopoVI_A_sf"/>
</dbReference>
<dbReference type="InterPro" id="IPR034136">
    <property type="entry name" value="TOPRIM_Topo6A/Spo11"/>
</dbReference>
<dbReference type="InterPro" id="IPR036388">
    <property type="entry name" value="WH-like_DNA-bd_sf"/>
</dbReference>
<dbReference type="PANTHER" id="PTHR10848">
    <property type="entry name" value="MEIOTIC RECOMBINATION PROTEIN SPO11"/>
    <property type="match status" value="1"/>
</dbReference>
<dbReference type="PANTHER" id="PTHR10848:SF3">
    <property type="entry name" value="MEIOTIC RECOMBINATION PROTEIN SPO11-1"/>
    <property type="match status" value="1"/>
</dbReference>
<dbReference type="Pfam" id="PF21180">
    <property type="entry name" value="TOP6A-Spo11_Toprim"/>
    <property type="match status" value="1"/>
</dbReference>
<dbReference type="Pfam" id="PF04406">
    <property type="entry name" value="TP6A_N"/>
    <property type="match status" value="1"/>
</dbReference>
<dbReference type="PRINTS" id="PR01551">
    <property type="entry name" value="SPO11HOMOLOG"/>
</dbReference>
<dbReference type="PRINTS" id="PR01550">
    <property type="entry name" value="TOP6AFAMILY"/>
</dbReference>
<dbReference type="SUPFAM" id="SSF56726">
    <property type="entry name" value="DNA topoisomerase IV, alpha subunit"/>
    <property type="match status" value="1"/>
</dbReference>
<dbReference type="PROSITE" id="PS52041">
    <property type="entry name" value="TOPO_IIB"/>
    <property type="match status" value="1"/>
</dbReference>
<organism>
    <name type="scientific">Arabidopsis thaliana</name>
    <name type="common">Mouse-ear cress</name>
    <dbReference type="NCBI Taxonomy" id="3702"/>
    <lineage>
        <taxon>Eukaryota</taxon>
        <taxon>Viridiplantae</taxon>
        <taxon>Streptophyta</taxon>
        <taxon>Embryophyta</taxon>
        <taxon>Tracheophyta</taxon>
        <taxon>Spermatophyta</taxon>
        <taxon>Magnoliopsida</taxon>
        <taxon>eudicotyledons</taxon>
        <taxon>Gunneridae</taxon>
        <taxon>Pentapetalae</taxon>
        <taxon>rosids</taxon>
        <taxon>malvids</taxon>
        <taxon>Brassicales</taxon>
        <taxon>Brassicaceae</taxon>
        <taxon>Camelineae</taxon>
        <taxon>Arabidopsis</taxon>
    </lineage>
</organism>
<reference key="1">
    <citation type="journal article" date="2000" name="Nucleic Acids Res.">
        <title>Molecular characterisation of two paralogous SPO11 homologues in Arabidopsis thaliana.</title>
        <authorList>
            <person name="Hartung F."/>
            <person name="Puchta H."/>
        </authorList>
    </citation>
    <scope>NUCLEOTIDE SEQUENCE [MRNA]</scope>
    <scope>TISSUE SPECIFICITY</scope>
    <scope>ALTERNATIVE SPLICING</scope>
    <source>
        <strain>cv. Columbia</strain>
        <tissue>Flower</tissue>
    </source>
</reference>
<reference key="2">
    <citation type="journal article" date="2001" name="EMBO J.">
        <title>AtSPO11-1 is necessary for efficient meiotic recombination in plants.</title>
        <authorList>
            <person name="Grelon M."/>
            <person name="Vezon D."/>
            <person name="Gendrot G."/>
            <person name="Pelletier G."/>
        </authorList>
    </citation>
    <scope>NUCLEOTIDE SEQUENCE [GENOMIC DNA]</scope>
    <scope>FUNCTION</scope>
    <scope>DISRUPTION PHENOTYPE</scope>
    <scope>ALTERNATIVE SPLICING</scope>
    <source>
        <strain>cv. Wassilewskija</strain>
    </source>
</reference>
<reference key="3">
    <citation type="journal article" date="2000" name="DNA Res.">
        <title>Structural analysis of Arabidopsis thaliana chromosome 3. II. Sequence features of the 4,251,695 bp regions covered by 90 P1, TAC and BAC clones.</title>
        <authorList>
            <person name="Kaneko T."/>
            <person name="Katoh T."/>
            <person name="Sato S."/>
            <person name="Nakamura Y."/>
            <person name="Asamizu E."/>
            <person name="Tabata S."/>
        </authorList>
    </citation>
    <scope>NUCLEOTIDE SEQUENCE [LARGE SCALE GENOMIC DNA]</scope>
    <source>
        <strain>cv. Columbia</strain>
    </source>
</reference>
<reference key="4">
    <citation type="journal article" date="2017" name="Plant J.">
        <title>Araport11: a complete reannotation of the Arabidopsis thaliana reference genome.</title>
        <authorList>
            <person name="Cheng C.Y."/>
            <person name="Krishnakumar V."/>
            <person name="Chan A.P."/>
            <person name="Thibaud-Nissen F."/>
            <person name="Schobel S."/>
            <person name="Town C.D."/>
        </authorList>
    </citation>
    <scope>GENOME REANNOTATION</scope>
    <source>
        <strain>cv. Columbia</strain>
    </source>
</reference>
<reference key="5">
    <citation type="submission" date="2006-09" db="EMBL/GenBank/DDBJ databases">
        <title>Arabidopsis ORF clones.</title>
        <authorList>
            <person name="Quinitio C."/>
            <person name="Chen H."/>
            <person name="Kim C.J."/>
            <person name="Shinn P."/>
            <person name="Ecker J.R."/>
        </authorList>
    </citation>
    <scope>NUCLEOTIDE SEQUENCE [MRNA]</scope>
    <source>
        <strain>cv. Columbia</strain>
    </source>
</reference>
<reference key="6">
    <citation type="journal article" date="2001" name="Gene">
        <title>Molecular characterization of homologues of both subunits A (SPO11) and B of the archaebacterial topoisomerase 6 in plants.</title>
        <authorList>
            <person name="Hartung F."/>
            <person name="Puchta H."/>
        </authorList>
    </citation>
    <scope>LACK OF INTERACTION WITH TOP6B</scope>
    <source>
        <strain>cv. Columbia</strain>
        <tissue>Flower</tissue>
    </source>
</reference>
<reference key="7">
    <citation type="journal article" date="2006" name="Plant J.">
        <title>Arabidopsis SPO11-2 functions with SPO11-1 in meiotic recombination.</title>
        <authorList>
            <person name="Stacey N.J."/>
            <person name="Kuromori T."/>
            <person name="Azumi Y."/>
            <person name="Roberts G."/>
            <person name="Breuer C."/>
            <person name="Wada T."/>
            <person name="Maxwell A."/>
            <person name="Roberts K."/>
            <person name="Sugimoto-Shirasu K."/>
        </authorList>
    </citation>
    <scope>FUNCTION</scope>
    <scope>DISRUPTION PHENOTYPE</scope>
</reference>
<reference key="8">
    <citation type="journal article" date="2007" name="EMBO J.">
        <title>AtPRD1 is required for meiotic double strand break formation in Arabidopsis thaliana.</title>
        <authorList>
            <person name="De Muyt A."/>
            <person name="Vezon D."/>
            <person name="Gendrot G."/>
            <person name="Gallois J.-L."/>
            <person name="Stevens R."/>
            <person name="Grelon M."/>
        </authorList>
    </citation>
    <scope>INTERACTION WITH PRD1</scope>
</reference>
<reference key="9">
    <citation type="journal article" date="2007" name="Plant Cell">
        <title>The catalytically active tyrosine residues of both SPO11-1 and SPO11-2 are required for meiotic double-strand break induction in Arabidopsis.</title>
        <authorList>
            <person name="Hartung F."/>
            <person name="Wurz-Wildersinn R."/>
            <person name="Fuchs J."/>
            <person name="Schubert I."/>
            <person name="Suer S."/>
            <person name="Puchta H."/>
        </authorList>
    </citation>
    <scope>FUNCTION</scope>
    <scope>ACTIVE SITE</scope>
    <scope>MUTAGENESIS OF TYR-103</scope>
</reference>
<reference key="10">
    <citation type="journal article" date="2007" name="Genes Dev.">
        <title>ASY1 mediates AtDMC1-dependent interhomolog recombination during meiosis in Arabidopsis.</title>
        <authorList>
            <person name="Sanchez-Moran E."/>
            <person name="Santos J.-L."/>
            <person name="Jones G.H."/>
            <person name="Franklin F.C."/>
        </authorList>
    </citation>
    <scope>SUBCELLULAR LOCATION</scope>
    <scope>DEVELOPMENTAL STAGE</scope>
</reference>
<reference key="11">
    <citation type="journal article" date="2009" name="PLoS Genet.">
        <title>A high throughput genetic screen identifies new early meiotic recombination functions in Arabidopsis thaliana.</title>
        <authorList>
            <person name="De Muyt A."/>
            <person name="Pereira L."/>
            <person name="Vezon D."/>
            <person name="Chelysheva L."/>
            <person name="Gendrot G."/>
            <person name="Chambon A."/>
            <person name="Laine-Choinard S."/>
            <person name="Pelletier G."/>
            <person name="Mercier R."/>
            <person name="Nogue F."/>
            <person name="Grelon M."/>
        </authorList>
    </citation>
    <scope>FUNCTION</scope>
    <scope>DISRUPTION PHENOTYPE</scope>
</reference>
<reference key="12">
    <citation type="journal article" date="2016" name="Science">
        <title>A DNA topoisomerase VI-like complex initiates meiotic recombination.</title>
        <authorList>
            <person name="Vrielynck N."/>
            <person name="Chambon A."/>
            <person name="Vezon D."/>
            <person name="Pereira L."/>
            <person name="Chelysheva L."/>
            <person name="De Muyt A."/>
            <person name="Mezard C."/>
            <person name="Mayer C."/>
            <person name="Grelon M."/>
        </authorList>
    </citation>
    <scope>FUNCTION</scope>
    <scope>INTERACTION WITH MTOPVIB</scope>
</reference>
<reference key="13">
    <citation type="journal article" date="2017" name="Sci. Rep.">
        <title>MTOPVIB interacts with AtPRD1 and plays important roles in formation of meiotic DNA double-strand breaks in Arabidopsis.</title>
        <authorList>
            <person name="Tang Y."/>
            <person name="Yin Z."/>
            <person name="Zeng Y."/>
            <person name="Zhang Q."/>
            <person name="Chen L."/>
            <person name="He Y."/>
            <person name="Lu P."/>
            <person name="Ye D."/>
            <person name="Zhang X."/>
        </authorList>
    </citation>
    <scope>INTERACTION WITH MTOPVIB AND PRD1</scope>
    <source>
        <strain>cv. Columbia</strain>
        <strain>cv. Landsberg erecta</strain>
    </source>
</reference>
<evidence type="ECO:0000250" key="1">
    <source>
        <dbReference type="UniProtKB" id="Q57815"/>
    </source>
</evidence>
<evidence type="ECO:0000255" key="2">
    <source>
        <dbReference type="PROSITE-ProRule" id="PRU01385"/>
    </source>
</evidence>
<evidence type="ECO:0000269" key="3">
    <source>
    </source>
</evidence>
<evidence type="ECO:0000269" key="4">
    <source>
    </source>
</evidence>
<evidence type="ECO:0000269" key="5">
    <source>
    </source>
</evidence>
<evidence type="ECO:0000269" key="6">
    <source>
    </source>
</evidence>
<evidence type="ECO:0000269" key="7">
    <source>
    </source>
</evidence>
<evidence type="ECO:0000269" key="8">
    <source>
    </source>
</evidence>
<evidence type="ECO:0000269" key="9">
    <source>
    </source>
</evidence>
<evidence type="ECO:0000269" key="10">
    <source>
    </source>
</evidence>
<evidence type="ECO:0000269" key="11">
    <source>
    </source>
</evidence>
<evidence type="ECO:0000269" key="12">
    <source>
    </source>
</evidence>
<evidence type="ECO:0000303" key="13">
    <source>
    </source>
</evidence>
<evidence type="ECO:0000305" key="14"/>
<evidence type="ECO:0000312" key="15">
    <source>
        <dbReference type="Araport" id="AT3G13170"/>
    </source>
</evidence>
<evidence type="ECO:0000312" key="16">
    <source>
        <dbReference type="EMBL" id="AAK21002.1"/>
    </source>
</evidence>
<gene>
    <name evidence="13" type="primary">SPO11-1</name>
    <name evidence="15" type="ordered locus">At3g13170</name>
    <name evidence="16" type="ORF">MJG19.19</name>
</gene>
<name>SPO11_ARATH</name>